<sequence length="329" mass="36281">MSKNLLDQLREVTVVVADTGDIEAIEKFKPRDATTNPSLITAAAQMPQYQDIVDDTLKGARQTLGPGASAAQVANRAFDRLAVSFGLKILQIIEGRVSTEVDARLSYDTEGTIEKAREIIKQYEAAGVSKERVLIKIAATWEGIEAAAVLEKEGIHCNLTLLFGLHQAIACAENGITLISPFVGRILDWYKKDTGRESYAPHEDPGVLSVTQIYNYYKKFGYKTEVMGASFRNIGEITELAGCDLLTIAPSLLAELQATEGELPRKLDPAKAKDYPIEKIHVNKYTFDKMHAENRMATEKLEEGIQGFTKALEQLEKLLADRLAHLEAA</sequence>
<comment type="function">
    <text evidence="2">Transaldolase is important for the balance of metabolites in the pentose-phosphate pathway.</text>
</comment>
<comment type="catalytic activity">
    <reaction evidence="2">
        <text>D-sedoheptulose 7-phosphate + D-glyceraldehyde 3-phosphate = D-erythrose 4-phosphate + beta-D-fructose 6-phosphate</text>
        <dbReference type="Rhea" id="RHEA:17053"/>
        <dbReference type="ChEBI" id="CHEBI:16897"/>
        <dbReference type="ChEBI" id="CHEBI:57483"/>
        <dbReference type="ChEBI" id="CHEBI:57634"/>
        <dbReference type="ChEBI" id="CHEBI:59776"/>
        <dbReference type="EC" id="2.2.1.2"/>
    </reaction>
</comment>
<comment type="pathway">
    <text evidence="2">Carbohydrate degradation; pentose phosphate pathway; D-glyceraldehyde 3-phosphate and beta-D-fructose 6-phosphate from D-ribose 5-phosphate and D-xylulose 5-phosphate (non-oxidative stage): step 2/3.</text>
</comment>
<comment type="subunit">
    <text evidence="1">Homodimer.</text>
</comment>
<comment type="subcellular location">
    <subcellularLocation>
        <location evidence="2">Cytoplasm</location>
    </subcellularLocation>
</comment>
<comment type="similarity">
    <text evidence="2">Belongs to the transaldolase family. Type 1 subfamily.</text>
</comment>
<accession>Q602L8</accession>
<name>TAL_METCA</name>
<protein>
    <recommendedName>
        <fullName evidence="2">Transaldolase</fullName>
        <ecNumber evidence="2">2.2.1.2</ecNumber>
    </recommendedName>
</protein>
<feature type="chain" id="PRO_0000230956" description="Transaldolase">
    <location>
        <begin position="1"/>
        <end position="329"/>
    </location>
</feature>
<feature type="active site" description="Schiff-base intermediate with substrate" evidence="2">
    <location>
        <position position="136"/>
    </location>
</feature>
<reference key="1">
    <citation type="journal article" date="2004" name="PLoS Biol.">
        <title>Genomic insights into methanotrophy: the complete genome sequence of Methylococcus capsulatus (Bath).</title>
        <authorList>
            <person name="Ward N.L."/>
            <person name="Larsen O."/>
            <person name="Sakwa J."/>
            <person name="Bruseth L."/>
            <person name="Khouri H.M."/>
            <person name="Durkin A.S."/>
            <person name="Dimitrov G."/>
            <person name="Jiang L."/>
            <person name="Scanlan D."/>
            <person name="Kang K.H."/>
            <person name="Lewis M.R."/>
            <person name="Nelson K.E."/>
            <person name="Methe B.A."/>
            <person name="Wu M."/>
            <person name="Heidelberg J.F."/>
            <person name="Paulsen I.T."/>
            <person name="Fouts D.E."/>
            <person name="Ravel J."/>
            <person name="Tettelin H."/>
            <person name="Ren Q."/>
            <person name="Read T.D."/>
            <person name="DeBoy R.T."/>
            <person name="Seshadri R."/>
            <person name="Salzberg S.L."/>
            <person name="Jensen H.B."/>
            <person name="Birkeland N.K."/>
            <person name="Nelson W.C."/>
            <person name="Dodson R.J."/>
            <person name="Grindhaug S.H."/>
            <person name="Holt I.E."/>
            <person name="Eidhammer I."/>
            <person name="Jonasen I."/>
            <person name="Vanaken S."/>
            <person name="Utterback T.R."/>
            <person name="Feldblyum T.V."/>
            <person name="Fraser C.M."/>
            <person name="Lillehaug J.R."/>
            <person name="Eisen J.A."/>
        </authorList>
    </citation>
    <scope>NUCLEOTIDE SEQUENCE [LARGE SCALE GENOMIC DNA]</scope>
    <source>
        <strain>ATCC 33009 / NCIMB 11132 / Bath</strain>
    </source>
</reference>
<proteinExistence type="inferred from homology"/>
<organism>
    <name type="scientific">Methylococcus capsulatus (strain ATCC 33009 / NCIMB 11132 / Bath)</name>
    <dbReference type="NCBI Taxonomy" id="243233"/>
    <lineage>
        <taxon>Bacteria</taxon>
        <taxon>Pseudomonadati</taxon>
        <taxon>Pseudomonadota</taxon>
        <taxon>Gammaproteobacteria</taxon>
        <taxon>Methylococcales</taxon>
        <taxon>Methylococcaceae</taxon>
        <taxon>Methylococcus</taxon>
    </lineage>
</organism>
<gene>
    <name evidence="2" type="primary">tal</name>
    <name type="ordered locus">MCA3045</name>
</gene>
<dbReference type="EC" id="2.2.1.2" evidence="2"/>
<dbReference type="EMBL" id="AE017282">
    <property type="protein sequence ID" value="AAU90887.1"/>
    <property type="molecule type" value="Genomic_DNA"/>
</dbReference>
<dbReference type="RefSeq" id="WP_010962233.1">
    <property type="nucleotide sequence ID" value="NC_002977.6"/>
</dbReference>
<dbReference type="SMR" id="Q602L8"/>
<dbReference type="STRING" id="243233.MCA3045"/>
<dbReference type="GeneID" id="88225206"/>
<dbReference type="KEGG" id="mca:MCA3045"/>
<dbReference type="eggNOG" id="COG0176">
    <property type="taxonomic scope" value="Bacteria"/>
</dbReference>
<dbReference type="HOGENOM" id="CLU_047470_0_0_6"/>
<dbReference type="UniPathway" id="UPA00115">
    <property type="reaction ID" value="UER00414"/>
</dbReference>
<dbReference type="Proteomes" id="UP000006821">
    <property type="component" value="Chromosome"/>
</dbReference>
<dbReference type="GO" id="GO:0005737">
    <property type="term" value="C:cytoplasm"/>
    <property type="evidence" value="ECO:0007669"/>
    <property type="project" value="UniProtKB-SubCell"/>
</dbReference>
<dbReference type="GO" id="GO:0004801">
    <property type="term" value="F:transaldolase activity"/>
    <property type="evidence" value="ECO:0000250"/>
    <property type="project" value="UniProtKB"/>
</dbReference>
<dbReference type="GO" id="GO:0005975">
    <property type="term" value="P:carbohydrate metabolic process"/>
    <property type="evidence" value="ECO:0007669"/>
    <property type="project" value="InterPro"/>
</dbReference>
<dbReference type="GO" id="GO:0006098">
    <property type="term" value="P:pentose-phosphate shunt"/>
    <property type="evidence" value="ECO:0007669"/>
    <property type="project" value="UniProtKB-UniRule"/>
</dbReference>
<dbReference type="CDD" id="cd00957">
    <property type="entry name" value="Transaldolase_TalAB"/>
    <property type="match status" value="1"/>
</dbReference>
<dbReference type="FunFam" id="3.20.20.70:FF:000002">
    <property type="entry name" value="Transaldolase"/>
    <property type="match status" value="1"/>
</dbReference>
<dbReference type="Gene3D" id="3.20.20.70">
    <property type="entry name" value="Aldolase class I"/>
    <property type="match status" value="1"/>
</dbReference>
<dbReference type="HAMAP" id="MF_00492">
    <property type="entry name" value="Transaldolase_1"/>
    <property type="match status" value="1"/>
</dbReference>
<dbReference type="InterPro" id="IPR013785">
    <property type="entry name" value="Aldolase_TIM"/>
</dbReference>
<dbReference type="InterPro" id="IPR001585">
    <property type="entry name" value="TAL/FSA"/>
</dbReference>
<dbReference type="InterPro" id="IPR004730">
    <property type="entry name" value="Transaldolase_1"/>
</dbReference>
<dbReference type="InterPro" id="IPR018225">
    <property type="entry name" value="Transaldolase_AS"/>
</dbReference>
<dbReference type="NCBIfam" id="NF008965">
    <property type="entry name" value="PRK12309.1"/>
    <property type="match status" value="1"/>
</dbReference>
<dbReference type="NCBIfam" id="TIGR00874">
    <property type="entry name" value="talAB"/>
    <property type="match status" value="1"/>
</dbReference>
<dbReference type="PANTHER" id="PTHR10683">
    <property type="entry name" value="TRANSALDOLASE"/>
    <property type="match status" value="1"/>
</dbReference>
<dbReference type="PANTHER" id="PTHR10683:SF18">
    <property type="entry name" value="TRANSALDOLASE"/>
    <property type="match status" value="1"/>
</dbReference>
<dbReference type="Pfam" id="PF00923">
    <property type="entry name" value="TAL_FSA"/>
    <property type="match status" value="1"/>
</dbReference>
<dbReference type="SUPFAM" id="SSF51569">
    <property type="entry name" value="Aldolase"/>
    <property type="match status" value="1"/>
</dbReference>
<dbReference type="PROSITE" id="PS01054">
    <property type="entry name" value="TRANSALDOLASE_1"/>
    <property type="match status" value="1"/>
</dbReference>
<evidence type="ECO:0000250" key="1"/>
<evidence type="ECO:0000255" key="2">
    <source>
        <dbReference type="HAMAP-Rule" id="MF_00492"/>
    </source>
</evidence>
<keyword id="KW-0963">Cytoplasm</keyword>
<keyword id="KW-0570">Pentose shunt</keyword>
<keyword id="KW-1185">Reference proteome</keyword>
<keyword id="KW-0704">Schiff base</keyword>
<keyword id="KW-0808">Transferase</keyword>